<name>RL18_NITV9</name>
<evidence type="ECO:0000255" key="1">
    <source>
        <dbReference type="HAMAP-Rule" id="MF_01337"/>
    </source>
</evidence>
<evidence type="ECO:0000305" key="2"/>
<sequence length="119" mass="12980">MTMTKNDARKRRKVRIRKKIAGSTERPRLVVYRSNLHVYAQIVDDATGATLVATSTLAIGKAQAGAHCNKAGAELVGKEIARLAGEKSIKRVVFDRNGYLYHGRIKAVADGAREGGLEF</sequence>
<accession>B8DNB2</accession>
<gene>
    <name evidence="1" type="primary">rplR</name>
    <name type="ordered locus">DvMF_0095</name>
</gene>
<comment type="function">
    <text evidence="1">This is one of the proteins that bind and probably mediate the attachment of the 5S RNA into the large ribosomal subunit, where it forms part of the central protuberance.</text>
</comment>
<comment type="subunit">
    <text evidence="1">Part of the 50S ribosomal subunit; part of the 5S rRNA/L5/L18/L25 subcomplex. Contacts the 5S and 23S rRNAs.</text>
</comment>
<comment type="similarity">
    <text evidence="1">Belongs to the universal ribosomal protein uL18 family.</text>
</comment>
<proteinExistence type="inferred from homology"/>
<protein>
    <recommendedName>
        <fullName evidence="1">Large ribosomal subunit protein uL18</fullName>
    </recommendedName>
    <alternativeName>
        <fullName evidence="2">50S ribosomal protein L18</fullName>
    </alternativeName>
</protein>
<reference key="1">
    <citation type="submission" date="2008-10" db="EMBL/GenBank/DDBJ databases">
        <title>Complete sequence of Desulfovibrio vulgaris str. 'Miyazaki F'.</title>
        <authorList>
            <person name="Lucas S."/>
            <person name="Copeland A."/>
            <person name="Lapidus A."/>
            <person name="Glavina del Rio T."/>
            <person name="Dalin E."/>
            <person name="Tice H."/>
            <person name="Bruce D."/>
            <person name="Goodwin L."/>
            <person name="Pitluck S."/>
            <person name="Sims D."/>
            <person name="Brettin T."/>
            <person name="Detter J.C."/>
            <person name="Han C."/>
            <person name="Larimer F."/>
            <person name="Land M."/>
            <person name="Hauser L."/>
            <person name="Kyrpides N."/>
            <person name="Mikhailova N."/>
            <person name="Hazen T.C."/>
            <person name="Richardson P."/>
        </authorList>
    </citation>
    <scope>NUCLEOTIDE SEQUENCE [LARGE SCALE GENOMIC DNA]</scope>
    <source>
        <strain>DSM 19637 / Miyazaki F</strain>
    </source>
</reference>
<organism>
    <name type="scientific">Nitratidesulfovibrio vulgaris (strain DSM 19637 / Miyazaki F)</name>
    <name type="common">Desulfovibrio vulgaris</name>
    <dbReference type="NCBI Taxonomy" id="883"/>
    <lineage>
        <taxon>Bacteria</taxon>
        <taxon>Pseudomonadati</taxon>
        <taxon>Thermodesulfobacteriota</taxon>
        <taxon>Desulfovibrionia</taxon>
        <taxon>Desulfovibrionales</taxon>
        <taxon>Desulfovibrionaceae</taxon>
        <taxon>Nitratidesulfovibrio</taxon>
    </lineage>
</organism>
<dbReference type="EMBL" id="CP001197">
    <property type="protein sequence ID" value="ACL07056.1"/>
    <property type="molecule type" value="Genomic_DNA"/>
</dbReference>
<dbReference type="SMR" id="B8DNB2"/>
<dbReference type="STRING" id="883.DvMF_0095"/>
<dbReference type="KEGG" id="dvm:DvMF_0095"/>
<dbReference type="eggNOG" id="COG0256">
    <property type="taxonomic scope" value="Bacteria"/>
</dbReference>
<dbReference type="HOGENOM" id="CLU_098841_0_1_7"/>
<dbReference type="OrthoDB" id="9810939at2"/>
<dbReference type="GO" id="GO:0005737">
    <property type="term" value="C:cytoplasm"/>
    <property type="evidence" value="ECO:0007669"/>
    <property type="project" value="UniProtKB-ARBA"/>
</dbReference>
<dbReference type="GO" id="GO:1990904">
    <property type="term" value="C:ribonucleoprotein complex"/>
    <property type="evidence" value="ECO:0007669"/>
    <property type="project" value="UniProtKB-KW"/>
</dbReference>
<dbReference type="GO" id="GO:0005840">
    <property type="term" value="C:ribosome"/>
    <property type="evidence" value="ECO:0007669"/>
    <property type="project" value="UniProtKB-KW"/>
</dbReference>
<dbReference type="GO" id="GO:0008097">
    <property type="term" value="F:5S rRNA binding"/>
    <property type="evidence" value="ECO:0007669"/>
    <property type="project" value="TreeGrafter"/>
</dbReference>
<dbReference type="GO" id="GO:0003735">
    <property type="term" value="F:structural constituent of ribosome"/>
    <property type="evidence" value="ECO:0007669"/>
    <property type="project" value="InterPro"/>
</dbReference>
<dbReference type="GO" id="GO:0006412">
    <property type="term" value="P:translation"/>
    <property type="evidence" value="ECO:0007669"/>
    <property type="project" value="UniProtKB-UniRule"/>
</dbReference>
<dbReference type="CDD" id="cd00432">
    <property type="entry name" value="Ribosomal_L18_L5e"/>
    <property type="match status" value="1"/>
</dbReference>
<dbReference type="FunFam" id="3.30.420.100:FF:000001">
    <property type="entry name" value="50S ribosomal protein L18"/>
    <property type="match status" value="1"/>
</dbReference>
<dbReference type="Gene3D" id="3.30.420.100">
    <property type="match status" value="1"/>
</dbReference>
<dbReference type="HAMAP" id="MF_01337_B">
    <property type="entry name" value="Ribosomal_uL18_B"/>
    <property type="match status" value="1"/>
</dbReference>
<dbReference type="InterPro" id="IPR004389">
    <property type="entry name" value="Ribosomal_uL18_bac-type"/>
</dbReference>
<dbReference type="InterPro" id="IPR005484">
    <property type="entry name" value="Ribosomal_uL18_bac/euk"/>
</dbReference>
<dbReference type="NCBIfam" id="TIGR00060">
    <property type="entry name" value="L18_bact"/>
    <property type="match status" value="1"/>
</dbReference>
<dbReference type="PANTHER" id="PTHR12899">
    <property type="entry name" value="39S RIBOSOMAL PROTEIN L18, MITOCHONDRIAL"/>
    <property type="match status" value="1"/>
</dbReference>
<dbReference type="PANTHER" id="PTHR12899:SF3">
    <property type="entry name" value="LARGE RIBOSOMAL SUBUNIT PROTEIN UL18M"/>
    <property type="match status" value="1"/>
</dbReference>
<dbReference type="Pfam" id="PF00861">
    <property type="entry name" value="Ribosomal_L18p"/>
    <property type="match status" value="1"/>
</dbReference>
<dbReference type="SUPFAM" id="SSF53137">
    <property type="entry name" value="Translational machinery components"/>
    <property type="match status" value="1"/>
</dbReference>
<keyword id="KW-0687">Ribonucleoprotein</keyword>
<keyword id="KW-0689">Ribosomal protein</keyword>
<keyword id="KW-0694">RNA-binding</keyword>
<keyword id="KW-0699">rRNA-binding</keyword>
<feature type="chain" id="PRO_1000142653" description="Large ribosomal subunit protein uL18">
    <location>
        <begin position="1"/>
        <end position="119"/>
    </location>
</feature>